<keyword id="KW-0002">3D-structure</keyword>
<keyword id="KW-0119">Carbohydrate metabolism</keyword>
<keyword id="KW-0328">Glycosyltransferase</keyword>
<keyword id="KW-1185">Reference proteome</keyword>
<keyword id="KW-0808">Transferase</keyword>
<organism>
    <name type="scientific">Thermococcus kodakarensis (strain ATCC BAA-918 / JCM 12380 / KOD1)</name>
    <name type="common">Pyrococcus kodakaraensis (strain KOD1)</name>
    <dbReference type="NCBI Taxonomy" id="69014"/>
    <lineage>
        <taxon>Archaea</taxon>
        <taxon>Methanobacteriati</taxon>
        <taxon>Methanobacteriota</taxon>
        <taxon>Thermococci</taxon>
        <taxon>Thermococcales</taxon>
        <taxon>Thermococcaceae</taxon>
        <taxon>Thermococcus</taxon>
    </lineage>
</organism>
<dbReference type="EC" id="2.4.1.18"/>
<dbReference type="EMBL" id="AP006878">
    <property type="protein sequence ID" value="BAD85625.1"/>
    <property type="molecule type" value="Genomic_DNA"/>
</dbReference>
<dbReference type="RefSeq" id="WP_011250387.1">
    <property type="nucleotide sequence ID" value="NC_006624.1"/>
</dbReference>
<dbReference type="PDB" id="3N8T">
    <property type="method" value="X-ray"/>
    <property type="resolution" value="2.40 A"/>
    <property type="chains" value="A=1-562"/>
</dbReference>
<dbReference type="PDB" id="3N92">
    <property type="method" value="X-ray"/>
    <property type="resolution" value="2.89 A"/>
    <property type="chains" value="A=1-562"/>
</dbReference>
<dbReference type="PDB" id="3N98">
    <property type="method" value="X-ray"/>
    <property type="resolution" value="1.87 A"/>
    <property type="chains" value="A=1-562"/>
</dbReference>
<dbReference type="PDBsum" id="3N8T"/>
<dbReference type="PDBsum" id="3N92"/>
<dbReference type="PDBsum" id="3N98"/>
<dbReference type="SMR" id="Q5JDJ7"/>
<dbReference type="STRING" id="69014.TK1436"/>
<dbReference type="CAZy" id="GH57">
    <property type="family name" value="Glycoside Hydrolase Family 57"/>
</dbReference>
<dbReference type="EnsemblBacteria" id="BAD85625">
    <property type="protein sequence ID" value="BAD85625"/>
    <property type="gene ID" value="TK1436"/>
</dbReference>
<dbReference type="GeneID" id="78447959"/>
<dbReference type="KEGG" id="tko:TK1436"/>
<dbReference type="PATRIC" id="fig|69014.16.peg.1398"/>
<dbReference type="eggNOG" id="arCOG03281">
    <property type="taxonomic scope" value="Archaea"/>
</dbReference>
<dbReference type="HOGENOM" id="CLU_008192_1_0_2"/>
<dbReference type="InParanoid" id="Q5JDJ7"/>
<dbReference type="OrthoDB" id="18576at2157"/>
<dbReference type="PhylomeDB" id="Q5JDJ7"/>
<dbReference type="BRENDA" id="2.4.1.18">
    <property type="organism ID" value="5246"/>
</dbReference>
<dbReference type="EvolutionaryTrace" id="Q5JDJ7"/>
<dbReference type="Proteomes" id="UP000000536">
    <property type="component" value="Chromosome"/>
</dbReference>
<dbReference type="GO" id="GO:0003844">
    <property type="term" value="F:1,4-alpha-glucan branching enzyme activity"/>
    <property type="evidence" value="ECO:0000314"/>
    <property type="project" value="UniProtKB"/>
</dbReference>
<dbReference type="GO" id="GO:0000166">
    <property type="term" value="F:nucleotide binding"/>
    <property type="evidence" value="ECO:0007669"/>
    <property type="project" value="InterPro"/>
</dbReference>
<dbReference type="GO" id="GO:0030979">
    <property type="term" value="P:alpha-glucan biosynthetic process"/>
    <property type="evidence" value="ECO:0000314"/>
    <property type="project" value="UniProtKB"/>
</dbReference>
<dbReference type="CDD" id="cd10816">
    <property type="entry name" value="GH57N_BE_TK1436_like"/>
    <property type="match status" value="1"/>
</dbReference>
<dbReference type="FunFam" id="3.20.110.10:FF:000009">
    <property type="entry name" value="1,4-alpha-glucan branching enzyme TK1436"/>
    <property type="match status" value="1"/>
</dbReference>
<dbReference type="Gene3D" id="1.10.150.20">
    <property type="entry name" value="5' to 3' exonuclease, C-terminal subdomain"/>
    <property type="match status" value="1"/>
</dbReference>
<dbReference type="Gene3D" id="1.20.1430.10">
    <property type="entry name" value="Families 57/38 glycoside transferase, middle domain"/>
    <property type="match status" value="1"/>
</dbReference>
<dbReference type="Gene3D" id="3.20.110.10">
    <property type="entry name" value="Glycoside hydrolase 38, N terminal domain"/>
    <property type="match status" value="1"/>
</dbReference>
<dbReference type="InterPro" id="IPR037090">
    <property type="entry name" value="57_glycoside_trans_central"/>
</dbReference>
<dbReference type="InterPro" id="IPR053621">
    <property type="entry name" value="Alpha-glucan_branching_enzyme"/>
</dbReference>
<dbReference type="InterPro" id="IPR015293">
    <property type="entry name" value="BE_C"/>
</dbReference>
<dbReference type="InterPro" id="IPR040042">
    <property type="entry name" value="Branching_enz_MT3115-like"/>
</dbReference>
<dbReference type="InterPro" id="IPR010995">
    <property type="entry name" value="DNA_repair_Rad51/TF_NusA_a-hlx"/>
</dbReference>
<dbReference type="InterPro" id="IPR011330">
    <property type="entry name" value="Glyco_hydro/deAcase_b/a-brl"/>
</dbReference>
<dbReference type="InterPro" id="IPR027291">
    <property type="entry name" value="Glyco_hydro_38_N_sf"/>
</dbReference>
<dbReference type="InterPro" id="IPR028995">
    <property type="entry name" value="Glyco_hydro_57/38_cen_sf"/>
</dbReference>
<dbReference type="InterPro" id="IPR004300">
    <property type="entry name" value="Glyco_hydro_57_N"/>
</dbReference>
<dbReference type="NCBIfam" id="NF041133">
    <property type="entry name" value="branch_enz_Thcocales"/>
    <property type="match status" value="1"/>
</dbReference>
<dbReference type="PANTHER" id="PTHR41695">
    <property type="entry name" value="1,4-ALPHA-GLUCAN BRANCHING ENZYME RV3031-RELATED"/>
    <property type="match status" value="1"/>
</dbReference>
<dbReference type="PANTHER" id="PTHR41695:SF1">
    <property type="entry name" value="1,4-ALPHA-GLUCAN BRANCHING ENZYME TK1436"/>
    <property type="match status" value="1"/>
</dbReference>
<dbReference type="Pfam" id="PF09210">
    <property type="entry name" value="BE_C"/>
    <property type="match status" value="1"/>
</dbReference>
<dbReference type="Pfam" id="PF03065">
    <property type="entry name" value="Glyco_hydro_57"/>
    <property type="match status" value="1"/>
</dbReference>
<dbReference type="Pfam" id="PF14520">
    <property type="entry name" value="HHH_5"/>
    <property type="match status" value="1"/>
</dbReference>
<dbReference type="SUPFAM" id="SSF88688">
    <property type="entry name" value="Families 57/38 glycoside transferase middle domain"/>
    <property type="match status" value="1"/>
</dbReference>
<dbReference type="SUPFAM" id="SSF88713">
    <property type="entry name" value="Glycoside hydrolase/deacetylase"/>
    <property type="match status" value="1"/>
</dbReference>
<dbReference type="SUPFAM" id="SSF47794">
    <property type="entry name" value="Rad51 N-terminal domain-like"/>
    <property type="match status" value="1"/>
</dbReference>
<evidence type="ECO:0000256" key="1">
    <source>
        <dbReference type="SAM" id="MobiDB-lite"/>
    </source>
</evidence>
<evidence type="ECO:0000269" key="2">
    <source>
    </source>
</evidence>
<evidence type="ECO:0000269" key="3">
    <source>
    </source>
</evidence>
<evidence type="ECO:0000305" key="4"/>
<evidence type="ECO:0007829" key="5">
    <source>
        <dbReference type="PDB" id="3N92"/>
    </source>
</evidence>
<evidence type="ECO:0007829" key="6">
    <source>
        <dbReference type="PDB" id="3N98"/>
    </source>
</evidence>
<gene>
    <name type="ordered locus">TK1436</name>
</gene>
<comment type="function">
    <text evidence="2">Catalyzes the formation of branch points in alpha-glucans by cleavage of an alpha-1,4 glycosidic bond and subsequent transfer of the cleaved-off oligosaccharide to a new alpha-1,6 position. The branch chain-length distribution of the reaction products shows degree of polymerization (DP) of 5 to 30, with two local maxima at DP 6 and DP 11. Exhibits an alpha-retaining catalytic mechanism. Does not display alpha-galactosidase or pullulanase activity, since melibiose and pullulan are not substrates. Is not able to catalyze the hydrolysis or transglycosylation of maltoheptaose, suggesting that the TK1436 protein contains neither alpha-amylase nor 4-alpha-glucanotransferase activity.</text>
</comment>
<comment type="catalytic activity">
    <reaction evidence="2">
        <text>Transfers a segment of a (1-&gt;4)-alpha-D-glucan chain to a primary hydroxy group in a similar glucan chain.</text>
        <dbReference type="EC" id="2.4.1.18"/>
    </reaction>
</comment>
<comment type="biophysicochemical properties">
    <phDependence>
        <text evidence="2">Optimum pH is 7.0.</text>
    </phDependence>
    <temperatureDependence>
        <text evidence="2">Optimum temperature is 70 degrees Celsius. Is thermostable up to 90 degrees Celsius.</text>
    </temperatureDependence>
</comment>
<comment type="subunit">
    <text evidence="2 3">Monomer.</text>
</comment>
<comment type="induction">
    <text evidence="2">Up-regulated by maltodextrin.</text>
</comment>
<comment type="domain">
    <text evidence="2">The C-terminus contains two copies of a helix-hairpin-helix (HhH) motif that are dispensable for activity and thermal stability.</text>
</comment>
<comment type="similarity">
    <text evidence="4">Belongs to the glycosyl hydrolase 57 family.</text>
</comment>
<sequence length="675" mass="78549">MKGYLTFVLHTHIPYVRKHGKWPFGEEWVFEAISETYIPLLMEFERLRDSGVKFGIVINVTPVLAEQLTDEYMKKAFEEYMERKLKAMEEDLKSGKYDEKAVSYMLNYFRKVYDYWKAINGDIIGKLRELQDQGYVEVITSAATHGYLPLLGRDEAIRAQIANGVATYEKHFGMKPKGIWLPECAYRPAGEWELPGGRKVKRQGIEKFLEEFGLRYFFVESRLIDEGPASNVYGEVLIADTEKTTLRPYWIKGSNVAVFARNRETGHQVWSAHYGYPGDFWYREFHKKAPKSGGQYWRITSKEVGLGEKEFYDPDKAMERVEEHARHFVSLVERLLREHEEKFGEKGIIVAPYDTELFGHWWFEGVKWLGRVLELLYQRGVETPTLSRFLEEYSGEKHEIELPEGSWGANSDHSTWWNEETEWTWPHIYRAEDRMVAIVSRFRGRDELTNRVIEQLARELLILEASDWQFLITTGQAKEYAKRRVLIHSRDFHRLANELVRYVKIGEFDVKLLEELEERDNPFRPVVVGPYVSENPPELEEYVEPPEVPPEKEETEEKPKVLTEKATSLALAVKKVKPVKEETREVKKKAVEASKRGKRKSSKSKRLPRKVSKKAPSKGPSDLLSIKGIGPKTFQKLKRAGVETIEDLKNANIEDLARKTGISTKRLKKFIAQVE</sequence>
<feature type="chain" id="PRO_0000413973" description="1,4-alpha-glucan branching enzyme TK1436">
    <location>
        <begin position="1"/>
        <end position="675"/>
    </location>
</feature>
<feature type="region of interest" description="Disordered" evidence="1">
    <location>
        <begin position="537"/>
        <end position="563"/>
    </location>
</feature>
<feature type="region of interest" description="Disordered" evidence="1">
    <location>
        <begin position="581"/>
        <end position="627"/>
    </location>
</feature>
<feature type="compositionally biased region" description="Basic and acidic residues" evidence="1">
    <location>
        <begin position="549"/>
        <end position="563"/>
    </location>
</feature>
<feature type="compositionally biased region" description="Basic and acidic residues" evidence="1">
    <location>
        <begin position="581"/>
        <end position="595"/>
    </location>
</feature>
<feature type="compositionally biased region" description="Basic residues" evidence="1">
    <location>
        <begin position="596"/>
        <end position="616"/>
    </location>
</feature>
<feature type="active site" description="Nucleophile" evidence="3">
    <location>
        <position position="183"/>
    </location>
</feature>
<feature type="active site" description="Proton donor" evidence="3">
    <location>
        <position position="354"/>
    </location>
</feature>
<feature type="binding site">
    <location>
        <position position="261"/>
    </location>
    <ligand>
        <name>substrate</name>
    </ligand>
</feature>
<feature type="binding site">
    <location>
        <position position="278"/>
    </location>
    <ligand>
        <name>substrate</name>
    </ligand>
</feature>
<feature type="binding site">
    <location>
        <position position="407"/>
    </location>
    <ligand>
        <name>substrate</name>
    </ligand>
</feature>
<feature type="binding site">
    <location>
        <position position="467"/>
    </location>
    <ligand>
        <name>substrate</name>
    </ligand>
</feature>
<feature type="binding site">
    <location>
        <position position="476"/>
    </location>
    <ligand>
        <name>substrate</name>
    </ligand>
</feature>
<feature type="site" description="Transition state stabilizer" evidence="4">
    <location>
        <position position="233"/>
    </location>
</feature>
<feature type="strand" evidence="6">
    <location>
        <begin position="4"/>
        <end position="11"/>
    </location>
</feature>
<feature type="strand" evidence="6">
    <location>
        <begin position="22"/>
        <end position="25"/>
    </location>
</feature>
<feature type="helix" evidence="6">
    <location>
        <begin position="26"/>
        <end position="35"/>
    </location>
</feature>
<feature type="helix" evidence="6">
    <location>
        <begin position="37"/>
        <end position="49"/>
    </location>
</feature>
<feature type="strand" evidence="6">
    <location>
        <begin position="56"/>
        <end position="60"/>
    </location>
</feature>
<feature type="helix" evidence="6">
    <location>
        <begin position="62"/>
        <end position="68"/>
    </location>
</feature>
<feature type="helix" evidence="6">
    <location>
        <begin position="71"/>
        <end position="94"/>
    </location>
</feature>
<feature type="helix" evidence="6">
    <location>
        <begin position="99"/>
        <end position="118"/>
    </location>
</feature>
<feature type="turn" evidence="6">
    <location>
        <begin position="119"/>
        <end position="121"/>
    </location>
</feature>
<feature type="helix" evidence="6">
    <location>
        <begin position="123"/>
        <end position="132"/>
    </location>
</feature>
<feature type="strand" evidence="6">
    <location>
        <begin position="135"/>
        <end position="141"/>
    </location>
</feature>
<feature type="helix" evidence="6">
    <location>
        <begin position="148"/>
        <end position="150"/>
    </location>
</feature>
<feature type="helix" evidence="6">
    <location>
        <begin position="154"/>
        <end position="172"/>
    </location>
</feature>
<feature type="strand" evidence="6">
    <location>
        <begin position="177"/>
        <end position="180"/>
    </location>
</feature>
<feature type="helix" evidence="6">
    <location>
        <begin position="182"/>
        <end position="184"/>
    </location>
</feature>
<feature type="strand" evidence="6">
    <location>
        <begin position="189"/>
        <end position="193"/>
    </location>
</feature>
<feature type="helix" evidence="6">
    <location>
        <begin position="195"/>
        <end position="197"/>
    </location>
</feature>
<feature type="strand" evidence="6">
    <location>
        <begin position="199"/>
        <end position="202"/>
    </location>
</feature>
<feature type="helix" evidence="6">
    <location>
        <begin position="205"/>
        <end position="210"/>
    </location>
</feature>
<feature type="turn" evidence="6">
    <location>
        <begin position="211"/>
        <end position="213"/>
    </location>
</feature>
<feature type="strand" evidence="6">
    <location>
        <begin position="216"/>
        <end position="219"/>
    </location>
</feature>
<feature type="helix" evidence="6">
    <location>
        <begin position="221"/>
        <end position="225"/>
    </location>
</feature>
<feature type="strand" evidence="5">
    <location>
        <begin position="231"/>
        <end position="234"/>
    </location>
</feature>
<feature type="strand" evidence="6">
    <location>
        <begin position="245"/>
        <end position="247"/>
    </location>
</feature>
<feature type="strand" evidence="6">
    <location>
        <begin position="249"/>
        <end position="251"/>
    </location>
</feature>
<feature type="strand" evidence="6">
    <location>
        <begin position="257"/>
        <end position="260"/>
    </location>
</feature>
<feature type="helix" evidence="6">
    <location>
        <begin position="263"/>
        <end position="270"/>
    </location>
</feature>
<feature type="turn" evidence="6">
    <location>
        <begin position="272"/>
        <end position="274"/>
    </location>
</feature>
<feature type="helix" evidence="6">
    <location>
        <begin position="276"/>
        <end position="278"/>
    </location>
</feature>
<feature type="turn" evidence="6">
    <location>
        <begin position="290"/>
        <end position="292"/>
    </location>
</feature>
<feature type="strand" evidence="6">
    <location>
        <begin position="301"/>
        <end position="304"/>
    </location>
</feature>
<feature type="helix" evidence="6">
    <location>
        <begin position="306"/>
        <end position="308"/>
    </location>
</feature>
<feature type="helix" evidence="6">
    <location>
        <begin position="314"/>
        <end position="343"/>
    </location>
</feature>
<feature type="strand" evidence="6">
    <location>
        <begin position="348"/>
        <end position="354"/>
    </location>
</feature>
<feature type="helix" evidence="6">
    <location>
        <begin position="355"/>
        <end position="357"/>
    </location>
</feature>
<feature type="turn" evidence="6">
    <location>
        <begin position="359"/>
        <end position="361"/>
    </location>
</feature>
<feature type="helix" evidence="6">
    <location>
        <begin position="365"/>
        <end position="378"/>
    </location>
</feature>
<feature type="helix" evidence="6">
    <location>
        <begin position="386"/>
        <end position="391"/>
    </location>
</feature>
<feature type="strand" evidence="6">
    <location>
        <begin position="398"/>
        <end position="400"/>
    </location>
</feature>
<feature type="helix" evidence="6">
    <location>
        <begin position="409"/>
        <end position="411"/>
    </location>
</feature>
<feature type="turn" evidence="6">
    <location>
        <begin position="414"/>
        <end position="416"/>
    </location>
</feature>
<feature type="turn" evidence="6">
    <location>
        <begin position="419"/>
        <end position="423"/>
    </location>
</feature>
<feature type="helix" evidence="6">
    <location>
        <begin position="424"/>
        <end position="442"/>
    </location>
</feature>
<feature type="helix" evidence="6">
    <location>
        <begin position="447"/>
        <end position="463"/>
    </location>
</feature>
<feature type="helix" evidence="6">
    <location>
        <begin position="467"/>
        <end position="473"/>
    </location>
</feature>
<feature type="helix" evidence="6">
    <location>
        <begin position="478"/>
        <end position="505"/>
    </location>
</feature>
<feature type="helix" evidence="6">
    <location>
        <begin position="510"/>
        <end position="519"/>
    </location>
</feature>
<feature type="helix" evidence="6">
    <location>
        <begin position="529"/>
        <end position="531"/>
    </location>
</feature>
<proteinExistence type="evidence at protein level"/>
<accession>Q5JDJ7</accession>
<name>BE_THEKO</name>
<reference key="1">
    <citation type="journal article" date="2005" name="Genome Res.">
        <title>Complete genome sequence of the hyperthermophilic archaeon Thermococcus kodakaraensis KOD1 and comparison with Pyrococcus genomes.</title>
        <authorList>
            <person name="Fukui T."/>
            <person name="Atomi H."/>
            <person name="Kanai T."/>
            <person name="Matsumi R."/>
            <person name="Fujiwara S."/>
            <person name="Imanaka T."/>
        </authorList>
    </citation>
    <scope>NUCLEOTIDE SEQUENCE [LARGE SCALE GENOMIC DNA]</scope>
    <source>
        <strain>ATCC BAA-918 / JCM 12380 / KOD1</strain>
    </source>
</reference>
<reference key="2">
    <citation type="journal article" date="2006" name="J. Bacteriol.">
        <title>A novel branching enzyme of the GH-57 family in the hyperthermophilic archaeon Thermococcus kodakaraensis KOD1.</title>
        <authorList>
            <person name="Murakami T."/>
            <person name="Kanai T."/>
            <person name="Takata H."/>
            <person name="Kuriki T."/>
            <person name="Imanaka T."/>
        </authorList>
    </citation>
    <scope>FUNCTION</scope>
    <scope>CATALYTIC ACTIVITY</scope>
    <scope>SUBSTRATE SPECIFICITY</scope>
    <scope>BIOPHYSICOCHEMICAL PROPERTIES</scope>
    <scope>INDUCTION</scope>
    <scope>SUBUNIT</scope>
    <scope>DOMAIN</scope>
    <source>
        <strain>ATCC BAA-918 / JCM 12380 / KOD1</strain>
    </source>
</reference>
<reference key="3">
    <citation type="journal article" date="2011" name="Proteins">
        <title>Structural basis for branching-enzyme activity of glycoside hydrolase family 57: structure and stability studies of a novel branching enzyme from the hyperthermophilic archaeon Thermococcus kodakaraensis KOD1.</title>
        <authorList>
            <person name="Santos C.R."/>
            <person name="Tonoli C.C."/>
            <person name="Trindade D.M."/>
            <person name="Betzel C."/>
            <person name="Takata H."/>
            <person name="Kuriki T."/>
            <person name="Kanai T."/>
            <person name="Imanaka T."/>
            <person name="Arni R.K."/>
            <person name="Murakami M.T."/>
        </authorList>
    </citation>
    <scope>X-RAY CRYSTALLOGRAPHY (1.87 ANGSTROMS) OF 1-562 OF APOENZYME AND IN COMPLEXES WITH GLUCOSE AND SUBSTRATE ANALOGS</scope>
    <scope>SUBUNIT</scope>
    <scope>ACTIVE SITES</scope>
    <source>
        <strain>ATCC BAA-918 / JCM 12380 / KOD1</strain>
    </source>
</reference>
<protein>
    <recommendedName>
        <fullName>1,4-alpha-glucan branching enzyme TK1436</fullName>
        <ecNumber>2.4.1.18</ecNumber>
    </recommendedName>
    <alternativeName>
        <fullName>1,4-alpha-D-glucan:1,4-alpha-D-glucan 6-glucosyl-transferase</fullName>
    </alternativeName>
    <alternativeName>
        <fullName>Alpha-(1-&gt;4)-glucan branching enzyme</fullName>
    </alternativeName>
    <alternativeName>
        <fullName>Branching enzyme</fullName>
        <shortName>BE</shortName>
    </alternativeName>
</protein>